<keyword id="KW-0021">Allosteric enzyme</keyword>
<keyword id="KW-0963">Cytoplasm</keyword>
<keyword id="KW-0520">NAD</keyword>
<keyword id="KW-0560">Oxidoreductase</keyword>
<keyword id="KW-0597">Phosphoprotein</keyword>
<accession>Q59828</accession>
<name>LDH_STREI</name>
<comment type="function">
    <text evidence="1">Catalyzes the conversion of lactate to pyruvate.</text>
</comment>
<comment type="catalytic activity">
    <reaction evidence="1">
        <text>(S)-lactate + NAD(+) = pyruvate + NADH + H(+)</text>
        <dbReference type="Rhea" id="RHEA:23444"/>
        <dbReference type="ChEBI" id="CHEBI:15361"/>
        <dbReference type="ChEBI" id="CHEBI:15378"/>
        <dbReference type="ChEBI" id="CHEBI:16651"/>
        <dbReference type="ChEBI" id="CHEBI:57540"/>
        <dbReference type="ChEBI" id="CHEBI:57945"/>
        <dbReference type="EC" id="1.1.1.27"/>
    </reaction>
</comment>
<comment type="activity regulation">
    <text evidence="1">Allosterically activated by fructose 1,6-bisphosphate (FBP).</text>
</comment>
<comment type="pathway">
    <text evidence="1">Fermentation; pyruvate fermentation to lactate; (S)-lactate from pyruvate: step 1/1.</text>
</comment>
<comment type="subunit">
    <text evidence="1">Homotetramer.</text>
</comment>
<comment type="subcellular location">
    <subcellularLocation>
        <location evidence="1">Cytoplasm</location>
    </subcellularLocation>
</comment>
<comment type="similarity">
    <text evidence="1 2">Belongs to the LDH/MDH superfamily. LDH family.</text>
</comment>
<evidence type="ECO:0000255" key="1">
    <source>
        <dbReference type="HAMAP-Rule" id="MF_00488"/>
    </source>
</evidence>
<evidence type="ECO:0000305" key="2"/>
<reference key="1">
    <citation type="journal article" date="1997" name="Curr. Microbiol.">
        <title>Cloning, sequence, and expression of the L-(+) lactate dehydrogenase of Streptococcus bovis.</title>
        <authorList>
            <person name="Wyckoff H.A."/>
            <person name="Chow J."/>
            <person name="Whitehead T.R."/>
            <person name="Cotta M.A."/>
        </authorList>
    </citation>
    <scope>NUCLEOTIDE SEQUENCE [GENOMIC DNA]</scope>
    <source>
        <strain>ATCC 700410 / JB1</strain>
    </source>
</reference>
<proteinExistence type="inferred from homology"/>
<protein>
    <recommendedName>
        <fullName evidence="1">L-lactate dehydrogenase</fullName>
        <shortName evidence="1">L-LDH</shortName>
        <ecNumber evidence="1">1.1.1.27</ecNumber>
    </recommendedName>
</protein>
<dbReference type="EC" id="1.1.1.27" evidence="1"/>
<dbReference type="EMBL" id="U60997">
    <property type="protein sequence ID" value="AAB81558.1"/>
    <property type="molecule type" value="Genomic_DNA"/>
</dbReference>
<dbReference type="RefSeq" id="WP_039696869.1">
    <property type="nucleotide sequence ID" value="NZ_FOLK01000001.1"/>
</dbReference>
<dbReference type="SMR" id="Q59828"/>
<dbReference type="STRING" id="1335.A6J79_09070"/>
<dbReference type="OrthoDB" id="9802969at2"/>
<dbReference type="UniPathway" id="UPA00554">
    <property type="reaction ID" value="UER00611"/>
</dbReference>
<dbReference type="GO" id="GO:0005737">
    <property type="term" value="C:cytoplasm"/>
    <property type="evidence" value="ECO:0007669"/>
    <property type="project" value="UniProtKB-SubCell"/>
</dbReference>
<dbReference type="GO" id="GO:0004459">
    <property type="term" value="F:L-lactate dehydrogenase activity"/>
    <property type="evidence" value="ECO:0007669"/>
    <property type="project" value="UniProtKB-UniRule"/>
</dbReference>
<dbReference type="GO" id="GO:0006096">
    <property type="term" value="P:glycolytic process"/>
    <property type="evidence" value="ECO:0007669"/>
    <property type="project" value="UniProtKB-UniRule"/>
</dbReference>
<dbReference type="GO" id="GO:0006089">
    <property type="term" value="P:lactate metabolic process"/>
    <property type="evidence" value="ECO:0007669"/>
    <property type="project" value="TreeGrafter"/>
</dbReference>
<dbReference type="CDD" id="cd05291">
    <property type="entry name" value="HicDH_like"/>
    <property type="match status" value="1"/>
</dbReference>
<dbReference type="FunFam" id="3.40.50.720:FF:000018">
    <property type="entry name" value="Malate dehydrogenase"/>
    <property type="match status" value="1"/>
</dbReference>
<dbReference type="Gene3D" id="3.90.110.10">
    <property type="entry name" value="Lactate dehydrogenase/glycoside hydrolase, family 4, C-terminal"/>
    <property type="match status" value="1"/>
</dbReference>
<dbReference type="Gene3D" id="3.40.50.720">
    <property type="entry name" value="NAD(P)-binding Rossmann-like Domain"/>
    <property type="match status" value="1"/>
</dbReference>
<dbReference type="HAMAP" id="MF_00488">
    <property type="entry name" value="Lactate_dehydrog"/>
    <property type="match status" value="1"/>
</dbReference>
<dbReference type="InterPro" id="IPR001557">
    <property type="entry name" value="L-lactate/malate_DH"/>
</dbReference>
<dbReference type="InterPro" id="IPR011304">
    <property type="entry name" value="L-lactate_DH"/>
</dbReference>
<dbReference type="InterPro" id="IPR018177">
    <property type="entry name" value="L-lactate_DH_AS"/>
</dbReference>
<dbReference type="InterPro" id="IPR022383">
    <property type="entry name" value="Lactate/malate_DH_C"/>
</dbReference>
<dbReference type="InterPro" id="IPR001236">
    <property type="entry name" value="Lactate/malate_DH_N"/>
</dbReference>
<dbReference type="InterPro" id="IPR015955">
    <property type="entry name" value="Lactate_DH/Glyco_Ohase_4_C"/>
</dbReference>
<dbReference type="InterPro" id="IPR036291">
    <property type="entry name" value="NAD(P)-bd_dom_sf"/>
</dbReference>
<dbReference type="NCBIfam" id="TIGR01771">
    <property type="entry name" value="L-LDH-NAD"/>
    <property type="match status" value="1"/>
</dbReference>
<dbReference type="NCBIfam" id="NF000824">
    <property type="entry name" value="PRK00066.1"/>
    <property type="match status" value="1"/>
</dbReference>
<dbReference type="PANTHER" id="PTHR43128">
    <property type="entry name" value="L-2-HYDROXYCARBOXYLATE DEHYDROGENASE (NAD(P)(+))"/>
    <property type="match status" value="1"/>
</dbReference>
<dbReference type="PANTHER" id="PTHR43128:SF16">
    <property type="entry name" value="L-LACTATE DEHYDROGENASE"/>
    <property type="match status" value="1"/>
</dbReference>
<dbReference type="Pfam" id="PF02866">
    <property type="entry name" value="Ldh_1_C"/>
    <property type="match status" value="1"/>
</dbReference>
<dbReference type="Pfam" id="PF00056">
    <property type="entry name" value="Ldh_1_N"/>
    <property type="match status" value="1"/>
</dbReference>
<dbReference type="PIRSF" id="PIRSF000102">
    <property type="entry name" value="Lac_mal_DH"/>
    <property type="match status" value="1"/>
</dbReference>
<dbReference type="PRINTS" id="PR00086">
    <property type="entry name" value="LLDHDRGNASE"/>
</dbReference>
<dbReference type="SUPFAM" id="SSF56327">
    <property type="entry name" value="LDH C-terminal domain-like"/>
    <property type="match status" value="1"/>
</dbReference>
<dbReference type="SUPFAM" id="SSF51735">
    <property type="entry name" value="NAD(P)-binding Rossmann-fold domains"/>
    <property type="match status" value="1"/>
</dbReference>
<dbReference type="PROSITE" id="PS00064">
    <property type="entry name" value="L_LDH"/>
    <property type="match status" value="1"/>
</dbReference>
<gene>
    <name evidence="1" type="primary">ldh</name>
</gene>
<organism>
    <name type="scientific">Streptococcus equinus</name>
    <name type="common">Streptococcus bovis</name>
    <dbReference type="NCBI Taxonomy" id="1335"/>
    <lineage>
        <taxon>Bacteria</taxon>
        <taxon>Bacillati</taxon>
        <taxon>Bacillota</taxon>
        <taxon>Bacilli</taxon>
        <taxon>Lactobacillales</taxon>
        <taxon>Streptococcaceae</taxon>
        <taxon>Streptococcus</taxon>
    </lineage>
</organism>
<feature type="chain" id="PRO_0000168395" description="L-lactate dehydrogenase">
    <location>
        <begin position="1"/>
        <end position="329"/>
    </location>
</feature>
<feature type="active site" description="Proton acceptor" evidence="1">
    <location>
        <position position="181"/>
    </location>
</feature>
<feature type="binding site" evidence="1">
    <location>
        <position position="18"/>
    </location>
    <ligand>
        <name>NAD(+)</name>
        <dbReference type="ChEBI" id="CHEBI:57540"/>
    </ligand>
</feature>
<feature type="binding site" evidence="1">
    <location>
        <position position="39"/>
    </location>
    <ligand>
        <name>NAD(+)</name>
        <dbReference type="ChEBI" id="CHEBI:57540"/>
    </ligand>
</feature>
<feature type="binding site" evidence="1">
    <location>
        <position position="46"/>
    </location>
    <ligand>
        <name>NAD(+)</name>
        <dbReference type="ChEBI" id="CHEBI:57540"/>
    </ligand>
</feature>
<feature type="binding site" evidence="1">
    <location>
        <position position="71"/>
    </location>
    <ligand>
        <name>NAD(+)</name>
        <dbReference type="ChEBI" id="CHEBI:57540"/>
    </ligand>
</feature>
<feature type="binding site" evidence="1">
    <location>
        <begin position="85"/>
        <end position="86"/>
    </location>
    <ligand>
        <name>NAD(+)</name>
        <dbReference type="ChEBI" id="CHEBI:57540"/>
    </ligand>
</feature>
<feature type="binding site" evidence="1">
    <location>
        <position position="88"/>
    </location>
    <ligand>
        <name>substrate</name>
    </ligand>
</feature>
<feature type="binding site" evidence="1">
    <location>
        <position position="94"/>
    </location>
    <ligand>
        <name>substrate</name>
    </ligand>
</feature>
<feature type="binding site" evidence="1">
    <location>
        <position position="107"/>
    </location>
    <ligand>
        <name>NAD(+)</name>
        <dbReference type="ChEBI" id="CHEBI:57540"/>
    </ligand>
</feature>
<feature type="binding site" evidence="1">
    <location>
        <begin position="124"/>
        <end position="126"/>
    </location>
    <ligand>
        <name>NAD(+)</name>
        <dbReference type="ChEBI" id="CHEBI:57540"/>
    </ligand>
</feature>
<feature type="binding site" evidence="1">
    <location>
        <begin position="126"/>
        <end position="129"/>
    </location>
    <ligand>
        <name>substrate</name>
    </ligand>
</feature>
<feature type="binding site" evidence="1">
    <location>
        <position position="149"/>
    </location>
    <ligand>
        <name>NAD(+)</name>
        <dbReference type="ChEBI" id="CHEBI:57540"/>
    </ligand>
</feature>
<feature type="binding site" evidence="1">
    <location>
        <begin position="154"/>
        <end position="157"/>
    </location>
    <ligand>
        <name>substrate</name>
    </ligand>
</feature>
<feature type="binding site" evidence="1">
    <location>
        <position position="159"/>
    </location>
    <ligand>
        <name>beta-D-fructose 1,6-bisphosphate</name>
        <dbReference type="ChEBI" id="CHEBI:32966"/>
        <note>allosteric activator</note>
    </ligand>
</feature>
<feature type="binding site" evidence="1">
    <location>
        <position position="174"/>
    </location>
    <ligand>
        <name>beta-D-fructose 1,6-bisphosphate</name>
        <dbReference type="ChEBI" id="CHEBI:32966"/>
        <note>allosteric activator</note>
    </ligand>
</feature>
<feature type="binding site" evidence="1">
    <location>
        <position position="235"/>
    </location>
    <ligand>
        <name>substrate</name>
    </ligand>
</feature>
<feature type="modified residue" description="Phosphotyrosine" evidence="1">
    <location>
        <position position="226"/>
    </location>
</feature>
<sequence length="329" mass="35352">MTATKQHKKVILVGDGAVGSSYAFALVNQGIAQELGIIEIPQLFNKAVGDAEDLSHALAFTSPKKIYAAKYEDCADADLVVITAGAPQKPGETRLDLVGKNLAINKSIVTEVVKSGFKGIFLVAANPVDVLTYSTWKFSGFPKERVIGSGTSLDSARFRQALAEKLDVDARSVHAYIMGEHGDSEFAVWSHANVAGVNLESYLKDVQNVEEAELVELFEGVRDAAYSIINKKGATFYGIAVALARITKAILNDENAVLPLSVFQEGQYANVTDCYIGQPAIVGAHGIVRPVNIPLNDAEQQKMEASAKELKAIIDEAFSKEEFASACKN</sequence>